<evidence type="ECO:0000255" key="1">
    <source>
        <dbReference type="HAMAP-Rule" id="MF_01374"/>
    </source>
</evidence>
<comment type="function">
    <text evidence="1">Thiolesterase that catalyzes the hydrolysis of S-D-lactoyl-glutathione to form glutathione and D-lactic acid.</text>
</comment>
<comment type="catalytic activity">
    <reaction evidence="1">
        <text>an S-(2-hydroxyacyl)glutathione + H2O = a 2-hydroxy carboxylate + glutathione + H(+)</text>
        <dbReference type="Rhea" id="RHEA:21864"/>
        <dbReference type="ChEBI" id="CHEBI:15377"/>
        <dbReference type="ChEBI" id="CHEBI:15378"/>
        <dbReference type="ChEBI" id="CHEBI:57925"/>
        <dbReference type="ChEBI" id="CHEBI:58896"/>
        <dbReference type="ChEBI" id="CHEBI:71261"/>
        <dbReference type="EC" id="3.1.2.6"/>
    </reaction>
</comment>
<comment type="cofactor">
    <cofactor evidence="1">
        <name>Zn(2+)</name>
        <dbReference type="ChEBI" id="CHEBI:29105"/>
    </cofactor>
    <text evidence="1">Binds 2 Zn(2+) ions per subunit.</text>
</comment>
<comment type="pathway">
    <text evidence="1">Secondary metabolite metabolism; methylglyoxal degradation; (R)-lactate from methylglyoxal: step 2/2.</text>
</comment>
<comment type="subunit">
    <text evidence="1">Monomer.</text>
</comment>
<comment type="similarity">
    <text evidence="1">Belongs to the metallo-beta-lactamase superfamily. Glyoxalase II family.</text>
</comment>
<organism>
    <name type="scientific">Escherichia coli O139:H28 (strain E24377A / ETEC)</name>
    <dbReference type="NCBI Taxonomy" id="331111"/>
    <lineage>
        <taxon>Bacteria</taxon>
        <taxon>Pseudomonadati</taxon>
        <taxon>Pseudomonadota</taxon>
        <taxon>Gammaproteobacteria</taxon>
        <taxon>Enterobacterales</taxon>
        <taxon>Enterobacteriaceae</taxon>
        <taxon>Escherichia</taxon>
    </lineage>
</organism>
<feature type="chain" id="PRO_1000068212" description="Hydroxyacylglutathione hydrolase">
    <location>
        <begin position="1"/>
        <end position="251"/>
    </location>
</feature>
<feature type="binding site" evidence="1">
    <location>
        <position position="53"/>
    </location>
    <ligand>
        <name>Zn(2+)</name>
        <dbReference type="ChEBI" id="CHEBI:29105"/>
        <label>1</label>
    </ligand>
</feature>
<feature type="binding site" evidence="1">
    <location>
        <position position="55"/>
    </location>
    <ligand>
        <name>Zn(2+)</name>
        <dbReference type="ChEBI" id="CHEBI:29105"/>
        <label>1</label>
    </ligand>
</feature>
<feature type="binding site" evidence="1">
    <location>
        <position position="57"/>
    </location>
    <ligand>
        <name>Zn(2+)</name>
        <dbReference type="ChEBI" id="CHEBI:29105"/>
        <label>2</label>
    </ligand>
</feature>
<feature type="binding site" evidence="1">
    <location>
        <position position="58"/>
    </location>
    <ligand>
        <name>Zn(2+)</name>
        <dbReference type="ChEBI" id="CHEBI:29105"/>
        <label>2</label>
    </ligand>
</feature>
<feature type="binding site" evidence="1">
    <location>
        <position position="110"/>
    </location>
    <ligand>
        <name>Zn(2+)</name>
        <dbReference type="ChEBI" id="CHEBI:29105"/>
        <label>1</label>
    </ligand>
</feature>
<feature type="binding site" evidence="1">
    <location>
        <position position="127"/>
    </location>
    <ligand>
        <name>Zn(2+)</name>
        <dbReference type="ChEBI" id="CHEBI:29105"/>
        <label>1</label>
    </ligand>
</feature>
<feature type="binding site" evidence="1">
    <location>
        <position position="127"/>
    </location>
    <ligand>
        <name>Zn(2+)</name>
        <dbReference type="ChEBI" id="CHEBI:29105"/>
        <label>2</label>
    </ligand>
</feature>
<feature type="binding site" evidence="1">
    <location>
        <position position="165"/>
    </location>
    <ligand>
        <name>Zn(2+)</name>
        <dbReference type="ChEBI" id="CHEBI:29105"/>
        <label>2</label>
    </ligand>
</feature>
<accession>A7ZHU8</accession>
<gene>
    <name evidence="1" type="primary">gloB</name>
    <name type="ordered locus">EcE24377A_0217</name>
</gene>
<reference key="1">
    <citation type="journal article" date="2008" name="J. Bacteriol.">
        <title>The pangenome structure of Escherichia coli: comparative genomic analysis of E. coli commensal and pathogenic isolates.</title>
        <authorList>
            <person name="Rasko D.A."/>
            <person name="Rosovitz M.J."/>
            <person name="Myers G.S.A."/>
            <person name="Mongodin E.F."/>
            <person name="Fricke W.F."/>
            <person name="Gajer P."/>
            <person name="Crabtree J."/>
            <person name="Sebaihia M."/>
            <person name="Thomson N.R."/>
            <person name="Chaudhuri R."/>
            <person name="Henderson I.R."/>
            <person name="Sperandio V."/>
            <person name="Ravel J."/>
        </authorList>
    </citation>
    <scope>NUCLEOTIDE SEQUENCE [LARGE SCALE GENOMIC DNA]</scope>
    <source>
        <strain>E24377A / ETEC</strain>
    </source>
</reference>
<proteinExistence type="inferred from homology"/>
<keyword id="KW-0378">Hydrolase</keyword>
<keyword id="KW-0479">Metal-binding</keyword>
<keyword id="KW-1185">Reference proteome</keyword>
<keyword id="KW-0862">Zinc</keyword>
<protein>
    <recommendedName>
        <fullName evidence="1">Hydroxyacylglutathione hydrolase</fullName>
        <ecNumber evidence="1">3.1.2.6</ecNumber>
    </recommendedName>
    <alternativeName>
        <fullName evidence="1">Glyoxalase II</fullName>
        <shortName evidence="1">Glx II</shortName>
    </alternativeName>
</protein>
<dbReference type="EC" id="3.1.2.6" evidence="1"/>
<dbReference type="EMBL" id="CP000800">
    <property type="protein sequence ID" value="ABV19437.1"/>
    <property type="molecule type" value="Genomic_DNA"/>
</dbReference>
<dbReference type="RefSeq" id="WP_001052720.1">
    <property type="nucleotide sequence ID" value="NC_009801.1"/>
</dbReference>
<dbReference type="SMR" id="A7ZHU8"/>
<dbReference type="GeneID" id="93777211"/>
<dbReference type="KEGG" id="ecw:EcE24377A_0217"/>
<dbReference type="HOGENOM" id="CLU_030571_4_1_6"/>
<dbReference type="UniPathway" id="UPA00619">
    <property type="reaction ID" value="UER00676"/>
</dbReference>
<dbReference type="Proteomes" id="UP000001122">
    <property type="component" value="Chromosome"/>
</dbReference>
<dbReference type="GO" id="GO:0004416">
    <property type="term" value="F:hydroxyacylglutathione hydrolase activity"/>
    <property type="evidence" value="ECO:0007669"/>
    <property type="project" value="UniProtKB-UniRule"/>
</dbReference>
<dbReference type="GO" id="GO:0046872">
    <property type="term" value="F:metal ion binding"/>
    <property type="evidence" value="ECO:0007669"/>
    <property type="project" value="UniProtKB-KW"/>
</dbReference>
<dbReference type="GO" id="GO:0019243">
    <property type="term" value="P:methylglyoxal catabolic process to D-lactate via S-lactoyl-glutathione"/>
    <property type="evidence" value="ECO:0007669"/>
    <property type="project" value="InterPro"/>
</dbReference>
<dbReference type="CDD" id="cd07723">
    <property type="entry name" value="hydroxyacylglutathione_hydrolase_MBL-fold"/>
    <property type="match status" value="1"/>
</dbReference>
<dbReference type="FunFam" id="3.60.15.10:FF:000012">
    <property type="entry name" value="Hydroxyacylglutathione hydrolase"/>
    <property type="match status" value="1"/>
</dbReference>
<dbReference type="Gene3D" id="3.60.15.10">
    <property type="entry name" value="Ribonuclease Z/Hydroxyacylglutathione hydrolase-like"/>
    <property type="match status" value="1"/>
</dbReference>
<dbReference type="HAMAP" id="MF_01374">
    <property type="entry name" value="Glyoxalase_2"/>
    <property type="match status" value="1"/>
</dbReference>
<dbReference type="InterPro" id="IPR035680">
    <property type="entry name" value="Clx_II_MBL"/>
</dbReference>
<dbReference type="InterPro" id="IPR050110">
    <property type="entry name" value="Glyoxalase_II_hydrolase"/>
</dbReference>
<dbReference type="InterPro" id="IPR032282">
    <property type="entry name" value="HAGH_C"/>
</dbReference>
<dbReference type="InterPro" id="IPR017782">
    <property type="entry name" value="Hydroxyacylglutathione_Hdrlase"/>
</dbReference>
<dbReference type="InterPro" id="IPR001279">
    <property type="entry name" value="Metallo-B-lactamas"/>
</dbReference>
<dbReference type="InterPro" id="IPR036866">
    <property type="entry name" value="RibonucZ/Hydroxyglut_hydro"/>
</dbReference>
<dbReference type="NCBIfam" id="TIGR03413">
    <property type="entry name" value="GSH_gloB"/>
    <property type="match status" value="1"/>
</dbReference>
<dbReference type="NCBIfam" id="NF007597">
    <property type="entry name" value="PRK10241.1"/>
    <property type="match status" value="1"/>
</dbReference>
<dbReference type="PANTHER" id="PTHR43705">
    <property type="entry name" value="HYDROXYACYLGLUTATHIONE HYDROLASE"/>
    <property type="match status" value="1"/>
</dbReference>
<dbReference type="PANTHER" id="PTHR43705:SF1">
    <property type="entry name" value="HYDROXYACYLGLUTATHIONE HYDROLASE GLOB"/>
    <property type="match status" value="1"/>
</dbReference>
<dbReference type="Pfam" id="PF16123">
    <property type="entry name" value="HAGH_C"/>
    <property type="match status" value="1"/>
</dbReference>
<dbReference type="Pfam" id="PF00753">
    <property type="entry name" value="Lactamase_B"/>
    <property type="match status" value="1"/>
</dbReference>
<dbReference type="PIRSF" id="PIRSF005457">
    <property type="entry name" value="Glx"/>
    <property type="match status" value="1"/>
</dbReference>
<dbReference type="SMART" id="SM00849">
    <property type="entry name" value="Lactamase_B"/>
    <property type="match status" value="1"/>
</dbReference>
<dbReference type="SUPFAM" id="SSF56281">
    <property type="entry name" value="Metallo-hydrolase/oxidoreductase"/>
    <property type="match status" value="1"/>
</dbReference>
<name>GLO2_ECO24</name>
<sequence>MNLNSIPAFDDNYIWVLNDEAGRCLIVDPGDAEPVLNAIAANNWQPEAIFLTHHHHDHVGGVKELVEKFPQIVVYGPQETQDKGTTQVVKDGETAFVLGHEFSVIATPGHTLGHICYFSKPYLFCGDTLFSGGCGRLFEGTASQMYQSLNKLSALPDDTLVCCAHEYTLSNMKFALSILPHDLSINDYYRKVKELRAKNQITLPVILKNERQINVFLRTEDIDLINVINEETLLQQPEERFAWLRSKKDRF</sequence>